<feature type="chain" id="PRO_1000097055" description="Pantothenate synthetase">
    <location>
        <begin position="1"/>
        <end position="257"/>
    </location>
</feature>
<feature type="active site" description="Proton donor" evidence="1">
    <location>
        <position position="36"/>
    </location>
</feature>
<feature type="binding site" evidence="1">
    <location>
        <begin position="29"/>
        <end position="36"/>
    </location>
    <ligand>
        <name>ATP</name>
        <dbReference type="ChEBI" id="CHEBI:30616"/>
    </ligand>
</feature>
<feature type="binding site" evidence="1">
    <location>
        <position position="60"/>
    </location>
    <ligand>
        <name>(R)-pantoate</name>
        <dbReference type="ChEBI" id="CHEBI:15980"/>
    </ligand>
</feature>
<feature type="binding site" evidence="1">
    <location>
        <position position="60"/>
    </location>
    <ligand>
        <name>beta-alanine</name>
        <dbReference type="ChEBI" id="CHEBI:57966"/>
    </ligand>
</feature>
<feature type="binding site" evidence="1">
    <location>
        <begin position="145"/>
        <end position="148"/>
    </location>
    <ligand>
        <name>ATP</name>
        <dbReference type="ChEBI" id="CHEBI:30616"/>
    </ligand>
</feature>
<feature type="binding site" evidence="1">
    <location>
        <position position="151"/>
    </location>
    <ligand>
        <name>(R)-pantoate</name>
        <dbReference type="ChEBI" id="CHEBI:15980"/>
    </ligand>
</feature>
<feature type="binding site" evidence="1">
    <location>
        <position position="174"/>
    </location>
    <ligand>
        <name>ATP</name>
        <dbReference type="ChEBI" id="CHEBI:30616"/>
    </ligand>
</feature>
<feature type="binding site" evidence="1">
    <location>
        <begin position="182"/>
        <end position="185"/>
    </location>
    <ligand>
        <name>ATP</name>
        <dbReference type="ChEBI" id="CHEBI:30616"/>
    </ligand>
</feature>
<comment type="function">
    <text evidence="1">Catalyzes the condensation of pantoate with beta-alanine in an ATP-dependent reaction via a pantoyl-adenylate intermediate.</text>
</comment>
<comment type="catalytic activity">
    <reaction evidence="1">
        <text>(R)-pantoate + beta-alanine + ATP = (R)-pantothenate + AMP + diphosphate + H(+)</text>
        <dbReference type="Rhea" id="RHEA:10912"/>
        <dbReference type="ChEBI" id="CHEBI:15378"/>
        <dbReference type="ChEBI" id="CHEBI:15980"/>
        <dbReference type="ChEBI" id="CHEBI:29032"/>
        <dbReference type="ChEBI" id="CHEBI:30616"/>
        <dbReference type="ChEBI" id="CHEBI:33019"/>
        <dbReference type="ChEBI" id="CHEBI:57966"/>
        <dbReference type="ChEBI" id="CHEBI:456215"/>
        <dbReference type="EC" id="6.3.2.1"/>
    </reaction>
</comment>
<comment type="pathway">
    <text evidence="1">Cofactor biosynthesis; (R)-pantothenate biosynthesis; (R)-pantothenate from (R)-pantoate and beta-alanine: step 1/1.</text>
</comment>
<comment type="subunit">
    <text evidence="1">Homodimer.</text>
</comment>
<comment type="subcellular location">
    <subcellularLocation>
        <location evidence="1">Cytoplasm</location>
    </subcellularLocation>
</comment>
<comment type="miscellaneous">
    <text evidence="1">The reaction proceeds by a bi uni uni bi ping pong mechanism.</text>
</comment>
<comment type="similarity">
    <text evidence="1">Belongs to the pantothenate synthetase family.</text>
</comment>
<reference key="1">
    <citation type="journal article" date="2009" name="Infect. Immun.">
        <title>Comparative genomics reveal extensive transposon-mediated genomic plasticity and diversity among potential effector proteins within the genus Coxiella.</title>
        <authorList>
            <person name="Beare P.A."/>
            <person name="Unsworth N."/>
            <person name="Andoh M."/>
            <person name="Voth D.E."/>
            <person name="Omsland A."/>
            <person name="Gilk S.D."/>
            <person name="Williams K.P."/>
            <person name="Sobral B.W."/>
            <person name="Kupko J.J. III"/>
            <person name="Porcella S.F."/>
            <person name="Samuel J.E."/>
            <person name="Heinzen R.A."/>
        </authorList>
    </citation>
    <scope>NUCLEOTIDE SEQUENCE [LARGE SCALE GENOMIC DNA]</scope>
    <source>
        <strain>Dugway 5J108-111</strain>
    </source>
</reference>
<name>PANC_COXBN</name>
<sequence>MTKVIEALSDWQSIRKTINDLSVGFVPTMGNLHAGHLSLLERSKCENTITVLSLFINPTQFNNKNDFKNYPRTLAQDIAMAEENGIDYVLAPTDDALYPDQYAYKITNSTINNQEAEFRPRHFDGVLTVVMKLLLLVKPTRAYFGEKDYQQLQLVKGLAEAFFLDTEIIGCKIVRNEFGLPLSSRNRRLTEDQYQLAQRFSEIFHSDLSCDEIKNALIQEGIIVDYIEDYNERRFAAVHVGDIRLIDNIPFAKDKKC</sequence>
<organism>
    <name type="scientific">Coxiella burnetii (strain Dugway 5J108-111)</name>
    <dbReference type="NCBI Taxonomy" id="434922"/>
    <lineage>
        <taxon>Bacteria</taxon>
        <taxon>Pseudomonadati</taxon>
        <taxon>Pseudomonadota</taxon>
        <taxon>Gammaproteobacteria</taxon>
        <taxon>Legionellales</taxon>
        <taxon>Coxiellaceae</taxon>
        <taxon>Coxiella</taxon>
    </lineage>
</organism>
<proteinExistence type="inferred from homology"/>
<accession>A9KEG8</accession>
<evidence type="ECO:0000255" key="1">
    <source>
        <dbReference type="HAMAP-Rule" id="MF_00158"/>
    </source>
</evidence>
<protein>
    <recommendedName>
        <fullName evidence="1">Pantothenate synthetase</fullName>
        <shortName evidence="1">PS</shortName>
        <ecNumber evidence="1">6.3.2.1</ecNumber>
    </recommendedName>
    <alternativeName>
        <fullName evidence="1">Pantoate--beta-alanine ligase</fullName>
    </alternativeName>
    <alternativeName>
        <fullName evidence="1">Pantoate-activating enzyme</fullName>
    </alternativeName>
</protein>
<dbReference type="EC" id="6.3.2.1" evidence="1"/>
<dbReference type="EMBL" id="CP000733">
    <property type="protein sequence ID" value="ABS77519.1"/>
    <property type="molecule type" value="Genomic_DNA"/>
</dbReference>
<dbReference type="RefSeq" id="WP_011997198.1">
    <property type="nucleotide sequence ID" value="NC_009727.1"/>
</dbReference>
<dbReference type="SMR" id="A9KEG8"/>
<dbReference type="KEGG" id="cbd:CBUD_1650"/>
<dbReference type="HOGENOM" id="CLU_047148_0_0_6"/>
<dbReference type="UniPathway" id="UPA00028">
    <property type="reaction ID" value="UER00005"/>
</dbReference>
<dbReference type="Proteomes" id="UP000008555">
    <property type="component" value="Chromosome"/>
</dbReference>
<dbReference type="GO" id="GO:0005829">
    <property type="term" value="C:cytosol"/>
    <property type="evidence" value="ECO:0007669"/>
    <property type="project" value="TreeGrafter"/>
</dbReference>
<dbReference type="GO" id="GO:0005524">
    <property type="term" value="F:ATP binding"/>
    <property type="evidence" value="ECO:0007669"/>
    <property type="project" value="UniProtKB-KW"/>
</dbReference>
<dbReference type="GO" id="GO:0004592">
    <property type="term" value="F:pantoate-beta-alanine ligase activity"/>
    <property type="evidence" value="ECO:0007669"/>
    <property type="project" value="UniProtKB-UniRule"/>
</dbReference>
<dbReference type="GO" id="GO:0015940">
    <property type="term" value="P:pantothenate biosynthetic process"/>
    <property type="evidence" value="ECO:0007669"/>
    <property type="project" value="UniProtKB-UniRule"/>
</dbReference>
<dbReference type="Gene3D" id="3.40.50.620">
    <property type="entry name" value="HUPs"/>
    <property type="match status" value="1"/>
</dbReference>
<dbReference type="Gene3D" id="3.30.1300.10">
    <property type="entry name" value="Pantoate-beta-alanine ligase, C-terminal domain"/>
    <property type="match status" value="1"/>
</dbReference>
<dbReference type="HAMAP" id="MF_00158">
    <property type="entry name" value="PanC"/>
    <property type="match status" value="1"/>
</dbReference>
<dbReference type="InterPro" id="IPR003721">
    <property type="entry name" value="Pantoate_ligase"/>
</dbReference>
<dbReference type="InterPro" id="IPR042176">
    <property type="entry name" value="Pantoate_ligase_C"/>
</dbReference>
<dbReference type="InterPro" id="IPR014729">
    <property type="entry name" value="Rossmann-like_a/b/a_fold"/>
</dbReference>
<dbReference type="NCBIfam" id="TIGR00018">
    <property type="entry name" value="panC"/>
    <property type="match status" value="1"/>
</dbReference>
<dbReference type="PANTHER" id="PTHR21299">
    <property type="entry name" value="CYTIDYLATE KINASE/PANTOATE-BETA-ALANINE LIGASE"/>
    <property type="match status" value="1"/>
</dbReference>
<dbReference type="PANTHER" id="PTHR21299:SF1">
    <property type="entry name" value="PANTOATE--BETA-ALANINE LIGASE"/>
    <property type="match status" value="1"/>
</dbReference>
<dbReference type="Pfam" id="PF02569">
    <property type="entry name" value="Pantoate_ligase"/>
    <property type="match status" value="1"/>
</dbReference>
<dbReference type="SUPFAM" id="SSF52374">
    <property type="entry name" value="Nucleotidylyl transferase"/>
    <property type="match status" value="1"/>
</dbReference>
<gene>
    <name evidence="1" type="primary">panC</name>
    <name type="ordered locus">CBUD_1650</name>
</gene>
<keyword id="KW-0067">ATP-binding</keyword>
<keyword id="KW-0963">Cytoplasm</keyword>
<keyword id="KW-0436">Ligase</keyword>
<keyword id="KW-0547">Nucleotide-binding</keyword>
<keyword id="KW-0566">Pantothenate biosynthesis</keyword>